<comment type="function">
    <text evidence="1">Regulatory subunit of a potassium efflux system that confers protection against electrophiles. Required for full activity of KefC. Shows redox enzymatic activity, but this enzymatic activity is not required for activation of KefC.</text>
</comment>
<comment type="catalytic activity">
    <reaction evidence="1">
        <text>a quinone + NADH + H(+) = a quinol + NAD(+)</text>
        <dbReference type="Rhea" id="RHEA:46160"/>
        <dbReference type="ChEBI" id="CHEBI:15378"/>
        <dbReference type="ChEBI" id="CHEBI:24646"/>
        <dbReference type="ChEBI" id="CHEBI:57540"/>
        <dbReference type="ChEBI" id="CHEBI:57945"/>
        <dbReference type="ChEBI" id="CHEBI:132124"/>
        <dbReference type="EC" id="1.6.5.2"/>
    </reaction>
</comment>
<comment type="catalytic activity">
    <reaction evidence="1">
        <text>a quinone + NADPH + H(+) = a quinol + NADP(+)</text>
        <dbReference type="Rhea" id="RHEA:46164"/>
        <dbReference type="ChEBI" id="CHEBI:15378"/>
        <dbReference type="ChEBI" id="CHEBI:24646"/>
        <dbReference type="ChEBI" id="CHEBI:57783"/>
        <dbReference type="ChEBI" id="CHEBI:58349"/>
        <dbReference type="ChEBI" id="CHEBI:132124"/>
        <dbReference type="EC" id="1.6.5.2"/>
    </reaction>
</comment>
<comment type="cofactor">
    <cofactor evidence="1">
        <name>FMN</name>
        <dbReference type="ChEBI" id="CHEBI:58210"/>
    </cofactor>
</comment>
<comment type="subunit">
    <text evidence="1">Homodimer. Interacts with KefC.</text>
</comment>
<comment type="subcellular location">
    <subcellularLocation>
        <location evidence="1">Cell inner membrane</location>
        <topology evidence="1">Peripheral membrane protein</topology>
        <orientation evidence="1">Cytoplasmic side</orientation>
    </subcellularLocation>
</comment>
<comment type="similarity">
    <text evidence="1">Belongs to the NAD(P)H dehydrogenase (quinone) family. KefF subfamily.</text>
</comment>
<protein>
    <recommendedName>
        <fullName evidence="1">Glutathione-regulated potassium-efflux system ancillary protein KefF</fullName>
    </recommendedName>
    <alternativeName>
        <fullName evidence="1">Quinone oxidoreductase KefF</fullName>
        <ecNumber evidence="1">1.6.5.2</ecNumber>
    </alternativeName>
</protein>
<name>KEFF_SALHS</name>
<feature type="chain" id="PRO_1000145567" description="Glutathione-regulated potassium-efflux system ancillary protein KefF">
    <location>
        <begin position="1"/>
        <end position="176"/>
    </location>
</feature>
<feature type="binding site" evidence="1">
    <location>
        <position position="8"/>
    </location>
    <ligand>
        <name>FMN</name>
        <dbReference type="ChEBI" id="CHEBI:58210"/>
    </ligand>
</feature>
<feature type="binding site" evidence="1">
    <location>
        <begin position="14"/>
        <end position="17"/>
    </location>
    <ligand>
        <name>FMN</name>
        <dbReference type="ChEBI" id="CHEBI:58210"/>
    </ligand>
</feature>
<feature type="binding site" evidence="1">
    <location>
        <begin position="65"/>
        <end position="68"/>
    </location>
    <ligand>
        <name>FMN</name>
        <dbReference type="ChEBI" id="CHEBI:58210"/>
    </ligand>
</feature>
<feature type="binding site" evidence="1">
    <location>
        <begin position="105"/>
        <end position="108"/>
    </location>
    <ligand>
        <name>FMN</name>
        <dbReference type="ChEBI" id="CHEBI:58210"/>
    </ligand>
</feature>
<gene>
    <name evidence="1" type="primary">kefF</name>
    <name type="ordered locus">SeHA_C0090</name>
</gene>
<reference key="1">
    <citation type="journal article" date="2011" name="J. Bacteriol.">
        <title>Comparative genomics of 28 Salmonella enterica isolates: evidence for CRISPR-mediated adaptive sublineage evolution.</title>
        <authorList>
            <person name="Fricke W.F."/>
            <person name="Mammel M.K."/>
            <person name="McDermott P.F."/>
            <person name="Tartera C."/>
            <person name="White D.G."/>
            <person name="Leclerc J.E."/>
            <person name="Ravel J."/>
            <person name="Cebula T.A."/>
        </authorList>
    </citation>
    <scope>NUCLEOTIDE SEQUENCE [LARGE SCALE GENOMIC DNA]</scope>
    <source>
        <strain>SL476</strain>
    </source>
</reference>
<dbReference type="EC" id="1.6.5.2" evidence="1"/>
<dbReference type="EMBL" id="CP001120">
    <property type="protein sequence ID" value="ACF70177.1"/>
    <property type="molecule type" value="Genomic_DNA"/>
</dbReference>
<dbReference type="RefSeq" id="WP_000600706.1">
    <property type="nucleotide sequence ID" value="NC_011083.1"/>
</dbReference>
<dbReference type="SMR" id="B4TII5"/>
<dbReference type="KEGG" id="seh:SeHA_C0090"/>
<dbReference type="HOGENOM" id="CLU_058643_0_2_6"/>
<dbReference type="Proteomes" id="UP000001866">
    <property type="component" value="Chromosome"/>
</dbReference>
<dbReference type="GO" id="GO:0005886">
    <property type="term" value="C:plasma membrane"/>
    <property type="evidence" value="ECO:0007669"/>
    <property type="project" value="UniProtKB-SubCell"/>
</dbReference>
<dbReference type="GO" id="GO:0009055">
    <property type="term" value="F:electron transfer activity"/>
    <property type="evidence" value="ECO:0007669"/>
    <property type="project" value="TreeGrafter"/>
</dbReference>
<dbReference type="GO" id="GO:0010181">
    <property type="term" value="F:FMN binding"/>
    <property type="evidence" value="ECO:0007669"/>
    <property type="project" value="UniProtKB-UniRule"/>
</dbReference>
<dbReference type="GO" id="GO:0050136">
    <property type="term" value="F:NADH:ubiquinone reductase (non-electrogenic) activity"/>
    <property type="evidence" value="ECO:0007669"/>
    <property type="project" value="RHEA"/>
</dbReference>
<dbReference type="GO" id="GO:0008753">
    <property type="term" value="F:NADPH dehydrogenase (quinone) activity"/>
    <property type="evidence" value="ECO:0007669"/>
    <property type="project" value="RHEA"/>
</dbReference>
<dbReference type="GO" id="GO:1901381">
    <property type="term" value="P:positive regulation of potassium ion transmembrane transport"/>
    <property type="evidence" value="ECO:0007669"/>
    <property type="project" value="UniProtKB-UniRule"/>
</dbReference>
<dbReference type="GO" id="GO:0006813">
    <property type="term" value="P:potassium ion transport"/>
    <property type="evidence" value="ECO:0007669"/>
    <property type="project" value="InterPro"/>
</dbReference>
<dbReference type="FunFam" id="3.40.50.360:FF:000008">
    <property type="entry name" value="Glutathione-regulated potassium-efflux system ancillary protein KefF"/>
    <property type="match status" value="1"/>
</dbReference>
<dbReference type="Gene3D" id="3.40.50.360">
    <property type="match status" value="1"/>
</dbReference>
<dbReference type="HAMAP" id="MF_01414">
    <property type="entry name" value="K_H_efflux_KefF"/>
    <property type="match status" value="1"/>
</dbReference>
<dbReference type="InterPro" id="IPR003680">
    <property type="entry name" value="Flavodoxin_fold"/>
</dbReference>
<dbReference type="InterPro" id="IPR029039">
    <property type="entry name" value="Flavoprotein-like_sf"/>
</dbReference>
<dbReference type="InterPro" id="IPR023948">
    <property type="entry name" value="K_H_efflux_KefF"/>
</dbReference>
<dbReference type="InterPro" id="IPR046980">
    <property type="entry name" value="KefG/KefF"/>
</dbReference>
<dbReference type="NCBIfam" id="NF002044">
    <property type="entry name" value="PRK00871.1"/>
    <property type="match status" value="1"/>
</dbReference>
<dbReference type="PANTHER" id="PTHR47307:SF2">
    <property type="entry name" value="GLUTATHIONE-REGULATED POTASSIUM-EFFLUX SYSTEM ANCILLARY PROTEIN KEFF"/>
    <property type="match status" value="1"/>
</dbReference>
<dbReference type="PANTHER" id="PTHR47307">
    <property type="entry name" value="GLUTATHIONE-REGULATED POTASSIUM-EFFLUX SYSTEM ANCILLARY PROTEIN KEFG"/>
    <property type="match status" value="1"/>
</dbReference>
<dbReference type="Pfam" id="PF02525">
    <property type="entry name" value="Flavodoxin_2"/>
    <property type="match status" value="1"/>
</dbReference>
<dbReference type="SUPFAM" id="SSF52218">
    <property type="entry name" value="Flavoproteins"/>
    <property type="match status" value="1"/>
</dbReference>
<sequence length="176" mass="20015">MILIIYAHPYPHHSHANKRMLEQAGTLENVEIRSLYHLYPDFNIDVAAEQEALSRASLIVWQHPMQWYSVPPLLKLWMDKVLTHGWAYGHGGTALHGKHLLWAVTTGGGENHFAIGSHPGFDVLSQPLQATALYCGLKWLPPFAMHCTFICDDDTLQAQARQYKQRLLAWQEVNHG</sequence>
<proteinExistence type="inferred from homology"/>
<keyword id="KW-0997">Cell inner membrane</keyword>
<keyword id="KW-1003">Cell membrane</keyword>
<keyword id="KW-0285">Flavoprotein</keyword>
<keyword id="KW-0288">FMN</keyword>
<keyword id="KW-0472">Membrane</keyword>
<keyword id="KW-0520">NAD</keyword>
<keyword id="KW-0560">Oxidoreductase</keyword>
<accession>B4TII5</accession>
<organism>
    <name type="scientific">Salmonella heidelberg (strain SL476)</name>
    <dbReference type="NCBI Taxonomy" id="454169"/>
    <lineage>
        <taxon>Bacteria</taxon>
        <taxon>Pseudomonadati</taxon>
        <taxon>Pseudomonadota</taxon>
        <taxon>Gammaproteobacteria</taxon>
        <taxon>Enterobacterales</taxon>
        <taxon>Enterobacteriaceae</taxon>
        <taxon>Salmonella</taxon>
    </lineage>
</organism>
<evidence type="ECO:0000255" key="1">
    <source>
        <dbReference type="HAMAP-Rule" id="MF_01414"/>
    </source>
</evidence>